<organism>
    <name type="scientific">Ruegeria pomeroyi (strain ATCC 700808 / DSM 15171 / DSS-3)</name>
    <name type="common">Silicibacter pomeroyi</name>
    <dbReference type="NCBI Taxonomy" id="246200"/>
    <lineage>
        <taxon>Bacteria</taxon>
        <taxon>Pseudomonadati</taxon>
        <taxon>Pseudomonadota</taxon>
        <taxon>Alphaproteobacteria</taxon>
        <taxon>Rhodobacterales</taxon>
        <taxon>Roseobacteraceae</taxon>
        <taxon>Ruegeria</taxon>
    </lineage>
</organism>
<feature type="chain" id="PRO_0000211727" description="DNA gyrase inhibitor YacG">
    <location>
        <begin position="1"/>
        <end position="60"/>
    </location>
</feature>
<feature type="region of interest" description="Disordered" evidence="2">
    <location>
        <begin position="38"/>
        <end position="60"/>
    </location>
</feature>
<feature type="compositionally biased region" description="Acidic residues" evidence="2">
    <location>
        <begin position="41"/>
        <end position="52"/>
    </location>
</feature>
<feature type="binding site" evidence="1">
    <location>
        <position position="3"/>
    </location>
    <ligand>
        <name>Zn(2+)</name>
        <dbReference type="ChEBI" id="CHEBI:29105"/>
    </ligand>
</feature>
<feature type="binding site" evidence="1">
    <location>
        <position position="6"/>
    </location>
    <ligand>
        <name>Zn(2+)</name>
        <dbReference type="ChEBI" id="CHEBI:29105"/>
    </ligand>
</feature>
<feature type="binding site" evidence="1">
    <location>
        <position position="18"/>
    </location>
    <ligand>
        <name>Zn(2+)</name>
        <dbReference type="ChEBI" id="CHEBI:29105"/>
    </ligand>
</feature>
<feature type="binding site" evidence="1">
    <location>
        <position position="22"/>
    </location>
    <ligand>
        <name>Zn(2+)</name>
        <dbReference type="ChEBI" id="CHEBI:29105"/>
    </ligand>
</feature>
<keyword id="KW-0479">Metal-binding</keyword>
<keyword id="KW-0614">Plasmid</keyword>
<keyword id="KW-1185">Reference proteome</keyword>
<keyword id="KW-0862">Zinc</keyword>
<geneLocation type="plasmid">
    <name>megaplasmid Spo</name>
</geneLocation>
<accession>Q5LLE7</accession>
<sequence>MTCPICGSKTAPSYRPFCSKRCADLDLAKWLNGSYAIPASSEDEEEPLDQEAETPVAPRH</sequence>
<dbReference type="EMBL" id="CP000032">
    <property type="protein sequence ID" value="AAV97581.1"/>
    <property type="molecule type" value="Genomic_DNA"/>
</dbReference>
<dbReference type="RefSeq" id="WP_011241863.1">
    <property type="nucleotide sequence ID" value="NC_006569.1"/>
</dbReference>
<dbReference type="SMR" id="Q5LLE7"/>
<dbReference type="PaxDb" id="246200-SPOA0450"/>
<dbReference type="KEGG" id="sil:SPOA0450"/>
<dbReference type="eggNOG" id="COG3024">
    <property type="taxonomic scope" value="Bacteria"/>
</dbReference>
<dbReference type="HOGENOM" id="CLU_178280_1_1_5"/>
<dbReference type="OrthoDB" id="9809663at2"/>
<dbReference type="Proteomes" id="UP000001023">
    <property type="component" value="Plasmid megaplasmid"/>
</dbReference>
<dbReference type="GO" id="GO:0008657">
    <property type="term" value="F:DNA topoisomerase type II (double strand cut, ATP-hydrolyzing) inhibitor activity"/>
    <property type="evidence" value="ECO:0007669"/>
    <property type="project" value="UniProtKB-UniRule"/>
</dbReference>
<dbReference type="GO" id="GO:0008270">
    <property type="term" value="F:zinc ion binding"/>
    <property type="evidence" value="ECO:0007669"/>
    <property type="project" value="UniProtKB-UniRule"/>
</dbReference>
<dbReference type="GO" id="GO:0006355">
    <property type="term" value="P:regulation of DNA-templated transcription"/>
    <property type="evidence" value="ECO:0007669"/>
    <property type="project" value="InterPro"/>
</dbReference>
<dbReference type="Gene3D" id="3.30.50.10">
    <property type="entry name" value="Erythroid Transcription Factor GATA-1, subunit A"/>
    <property type="match status" value="1"/>
</dbReference>
<dbReference type="HAMAP" id="MF_00649">
    <property type="entry name" value="DNA_gyrase_inhibitor_YacG"/>
    <property type="match status" value="1"/>
</dbReference>
<dbReference type="InterPro" id="IPR005584">
    <property type="entry name" value="DNA_gyrase_inhibitor_YacG"/>
</dbReference>
<dbReference type="InterPro" id="IPR013088">
    <property type="entry name" value="Znf_NHR/GATA"/>
</dbReference>
<dbReference type="PANTHER" id="PTHR36150">
    <property type="entry name" value="DNA GYRASE INHIBITOR YACG"/>
    <property type="match status" value="1"/>
</dbReference>
<dbReference type="PANTHER" id="PTHR36150:SF1">
    <property type="entry name" value="DNA GYRASE INHIBITOR YACG"/>
    <property type="match status" value="1"/>
</dbReference>
<dbReference type="Pfam" id="PF03884">
    <property type="entry name" value="YacG"/>
    <property type="match status" value="1"/>
</dbReference>
<dbReference type="SUPFAM" id="SSF57716">
    <property type="entry name" value="Glucocorticoid receptor-like (DNA-binding domain)"/>
    <property type="match status" value="1"/>
</dbReference>
<proteinExistence type="inferred from homology"/>
<gene>
    <name evidence="1" type="primary">yacG</name>
    <name type="ordered locus">SPOA0450</name>
</gene>
<comment type="function">
    <text evidence="1">Inhibits all the catalytic activities of DNA gyrase by preventing its interaction with DNA. Acts by binding directly to the C-terminal domain of GyrB, which probably disrupts DNA binding by the gyrase.</text>
</comment>
<comment type="cofactor">
    <cofactor evidence="1">
        <name>Zn(2+)</name>
        <dbReference type="ChEBI" id="CHEBI:29105"/>
    </cofactor>
    <text evidence="1">Binds 1 zinc ion.</text>
</comment>
<comment type="subunit">
    <text evidence="1">Interacts with GyrB.</text>
</comment>
<comment type="similarity">
    <text evidence="1">Belongs to the DNA gyrase inhibitor YacG family.</text>
</comment>
<protein>
    <recommendedName>
        <fullName evidence="1">DNA gyrase inhibitor YacG</fullName>
    </recommendedName>
</protein>
<reference key="1">
    <citation type="journal article" date="2004" name="Nature">
        <title>Genome sequence of Silicibacter pomeroyi reveals adaptations to the marine environment.</title>
        <authorList>
            <person name="Moran M.A."/>
            <person name="Buchan A."/>
            <person name="Gonzalez J.M."/>
            <person name="Heidelberg J.F."/>
            <person name="Whitman W.B."/>
            <person name="Kiene R.P."/>
            <person name="Henriksen J.R."/>
            <person name="King G.M."/>
            <person name="Belas R."/>
            <person name="Fuqua C."/>
            <person name="Brinkac L.M."/>
            <person name="Lewis M."/>
            <person name="Johri S."/>
            <person name="Weaver B."/>
            <person name="Pai G."/>
            <person name="Eisen J.A."/>
            <person name="Rahe E."/>
            <person name="Sheldon W.M."/>
            <person name="Ye W."/>
            <person name="Miller T.R."/>
            <person name="Carlton J."/>
            <person name="Rasko D.A."/>
            <person name="Paulsen I.T."/>
            <person name="Ren Q."/>
            <person name="Daugherty S.C."/>
            <person name="DeBoy R.T."/>
            <person name="Dodson R.J."/>
            <person name="Durkin A.S."/>
            <person name="Madupu R."/>
            <person name="Nelson W.C."/>
            <person name="Sullivan S.A."/>
            <person name="Rosovitz M.J."/>
            <person name="Haft D.H."/>
            <person name="Selengut J."/>
            <person name="Ward N."/>
        </authorList>
    </citation>
    <scope>NUCLEOTIDE SEQUENCE [LARGE SCALE GENOMIC DNA]</scope>
    <source>
        <strain>ATCC 700808 / DSM 15171 / DSS-3</strain>
    </source>
</reference>
<reference key="2">
    <citation type="journal article" date="2014" name="Stand. Genomic Sci.">
        <title>An updated genome annotation for the model marine bacterium Ruegeria pomeroyi DSS-3.</title>
        <authorList>
            <person name="Rivers A.R."/>
            <person name="Smith C.B."/>
            <person name="Moran M.A."/>
        </authorList>
    </citation>
    <scope>GENOME REANNOTATION</scope>
    <source>
        <strain>ATCC 700808 / DSM 15171 / DSS-3</strain>
    </source>
</reference>
<name>YACG_RUEPO</name>
<evidence type="ECO:0000255" key="1">
    <source>
        <dbReference type="HAMAP-Rule" id="MF_00649"/>
    </source>
</evidence>
<evidence type="ECO:0000256" key="2">
    <source>
        <dbReference type="SAM" id="MobiDB-lite"/>
    </source>
</evidence>